<gene>
    <name type="ordered locus">EAT1b_0871</name>
</gene>
<reference key="1">
    <citation type="journal article" date="2011" name="J. Bacteriol.">
        <title>Complete genome sequence of the Thermophilic Bacterium Exiguobacterium sp. AT1b.</title>
        <authorList>
            <person name="Vishnivetskaya T.A."/>
            <person name="Lucas S."/>
            <person name="Copeland A."/>
            <person name="Lapidus A."/>
            <person name="Glavina del Rio T."/>
            <person name="Dalin E."/>
            <person name="Tice H."/>
            <person name="Bruce D.C."/>
            <person name="Goodwin L.A."/>
            <person name="Pitluck S."/>
            <person name="Saunders E."/>
            <person name="Brettin T."/>
            <person name="Detter C."/>
            <person name="Han C."/>
            <person name="Larimer F."/>
            <person name="Land M.L."/>
            <person name="Hauser L.J."/>
            <person name="Kyrpides N.C."/>
            <person name="Ovchinnikova G."/>
            <person name="Kathariou S."/>
            <person name="Ramaley R.F."/>
            <person name="Rodrigues D.F."/>
            <person name="Hendrix C."/>
            <person name="Richardson P."/>
            <person name="Tiedje J.M."/>
        </authorList>
    </citation>
    <scope>NUCLEOTIDE SEQUENCE [LARGE SCALE GENOMIC DNA]</scope>
    <source>
        <strain>ATCC BAA-1283 / AT1b</strain>
    </source>
</reference>
<keyword id="KW-1003">Cell membrane</keyword>
<keyword id="KW-0472">Membrane</keyword>
<keyword id="KW-0812">Transmembrane</keyword>
<keyword id="KW-1133">Transmembrane helix</keyword>
<accession>C4L5I5</accession>
<organism>
    <name type="scientific">Exiguobacterium sp. (strain ATCC BAA-1283 / AT1b)</name>
    <dbReference type="NCBI Taxonomy" id="360911"/>
    <lineage>
        <taxon>Bacteria</taxon>
        <taxon>Bacillati</taxon>
        <taxon>Bacillota</taxon>
        <taxon>Bacilli</taxon>
        <taxon>Bacillales</taxon>
        <taxon>Bacillales Family XII. Incertae Sedis</taxon>
        <taxon>Exiguobacterium</taxon>
    </lineage>
</organism>
<dbReference type="EMBL" id="CP001615">
    <property type="protein sequence ID" value="ACQ69800.1"/>
    <property type="molecule type" value="Genomic_DNA"/>
</dbReference>
<dbReference type="RefSeq" id="WP_012726919.1">
    <property type="nucleotide sequence ID" value="NC_012673.1"/>
</dbReference>
<dbReference type="SMR" id="C4L5I5"/>
<dbReference type="STRING" id="360911.EAT1b_0871"/>
<dbReference type="KEGG" id="eat:EAT1b_0871"/>
<dbReference type="eggNOG" id="COG4843">
    <property type="taxonomic scope" value="Bacteria"/>
</dbReference>
<dbReference type="HOGENOM" id="CLU_106166_1_1_9"/>
<dbReference type="OrthoDB" id="48231at2"/>
<dbReference type="Proteomes" id="UP000000716">
    <property type="component" value="Chromosome"/>
</dbReference>
<dbReference type="GO" id="GO:0005886">
    <property type="term" value="C:plasma membrane"/>
    <property type="evidence" value="ECO:0007669"/>
    <property type="project" value="UniProtKB-SubCell"/>
</dbReference>
<dbReference type="CDD" id="cd16381">
    <property type="entry name" value="YitT_C_like_1"/>
    <property type="match status" value="1"/>
</dbReference>
<dbReference type="HAMAP" id="MF_01515">
    <property type="entry name" value="UPF0316"/>
    <property type="match status" value="1"/>
</dbReference>
<dbReference type="InterPro" id="IPR019264">
    <property type="entry name" value="DUF2179"/>
</dbReference>
<dbReference type="InterPro" id="IPR044035">
    <property type="entry name" value="DUF5698"/>
</dbReference>
<dbReference type="InterPro" id="IPR022930">
    <property type="entry name" value="UPF0316"/>
</dbReference>
<dbReference type="NCBIfam" id="NF003194">
    <property type="entry name" value="PRK04164.1-5"/>
    <property type="match status" value="1"/>
</dbReference>
<dbReference type="PANTHER" id="PTHR40060">
    <property type="entry name" value="UPF0316 PROTEIN YEBE"/>
    <property type="match status" value="1"/>
</dbReference>
<dbReference type="PANTHER" id="PTHR40060:SF1">
    <property type="entry name" value="UPF0316 PROTEIN YEBE"/>
    <property type="match status" value="1"/>
</dbReference>
<dbReference type="Pfam" id="PF10035">
    <property type="entry name" value="DUF2179"/>
    <property type="match status" value="1"/>
</dbReference>
<dbReference type="Pfam" id="PF18955">
    <property type="entry name" value="DUF5698"/>
    <property type="match status" value="1"/>
</dbReference>
<feature type="chain" id="PRO_1000215350" description="UPF0316 protein EAT1b_0871">
    <location>
        <begin position="1"/>
        <end position="171"/>
    </location>
</feature>
<feature type="transmembrane region" description="Helical" evidence="1">
    <location>
        <begin position="4"/>
        <end position="24"/>
    </location>
</feature>
<feature type="transmembrane region" description="Helical" evidence="1">
    <location>
        <begin position="32"/>
        <end position="52"/>
    </location>
</feature>
<feature type="transmembrane region" description="Helical" evidence="1">
    <location>
        <begin position="57"/>
        <end position="77"/>
    </location>
</feature>
<protein>
    <recommendedName>
        <fullName evidence="1">UPF0316 protein EAT1b_0871</fullName>
    </recommendedName>
</protein>
<proteinExistence type="inferred from homology"/>
<evidence type="ECO:0000255" key="1">
    <source>
        <dbReference type="HAMAP-Rule" id="MF_01515"/>
    </source>
</evidence>
<name>Y871_EXISA</name>
<sequence length="171" mass="19279">MGQILLILLLQLIYVPVLTLRTIMLVKGKTVIAGLFGTLETLIYIFALGIVFQDLTTVGMIVYAVGFGLGILLGGFVERKLAIGYNMIQVHTKEYPAELIQQMRDNGYGVTHYQGQGRDGVRYRLDVLAARTRMKELRELVEKHEPKAFLVAFDPIDFKGGYMMKGLRRPK</sequence>
<comment type="subcellular location">
    <subcellularLocation>
        <location evidence="1">Cell membrane</location>
        <topology evidence="1">Multi-pass membrane protein</topology>
    </subcellularLocation>
</comment>
<comment type="similarity">
    <text evidence="1">Belongs to the UPF0316 family.</text>
</comment>